<proteinExistence type="inferred from homology"/>
<keyword id="KW-0963">Cytoplasm</keyword>
<keyword id="KW-0342">GTP-binding</keyword>
<keyword id="KW-0436">Ligase</keyword>
<keyword id="KW-0460">Magnesium</keyword>
<keyword id="KW-0479">Metal-binding</keyword>
<keyword id="KW-0547">Nucleotide-binding</keyword>
<keyword id="KW-0658">Purine biosynthesis</keyword>
<comment type="function">
    <text evidence="1">Plays an important role in the de novo pathway of purine nucleotide biosynthesis. Catalyzes the first committed step in the biosynthesis of AMP from IMP.</text>
</comment>
<comment type="catalytic activity">
    <reaction evidence="1">
        <text>IMP + L-aspartate + GTP = N(6)-(1,2-dicarboxyethyl)-AMP + GDP + phosphate + 2 H(+)</text>
        <dbReference type="Rhea" id="RHEA:15753"/>
        <dbReference type="ChEBI" id="CHEBI:15378"/>
        <dbReference type="ChEBI" id="CHEBI:29991"/>
        <dbReference type="ChEBI" id="CHEBI:37565"/>
        <dbReference type="ChEBI" id="CHEBI:43474"/>
        <dbReference type="ChEBI" id="CHEBI:57567"/>
        <dbReference type="ChEBI" id="CHEBI:58053"/>
        <dbReference type="ChEBI" id="CHEBI:58189"/>
        <dbReference type="EC" id="6.3.4.4"/>
    </reaction>
</comment>
<comment type="cofactor">
    <cofactor evidence="1">
        <name>Mg(2+)</name>
        <dbReference type="ChEBI" id="CHEBI:18420"/>
    </cofactor>
    <text evidence="1">Binds 1 Mg(2+) ion per subunit.</text>
</comment>
<comment type="pathway">
    <text evidence="1">Purine metabolism; AMP biosynthesis via de novo pathway; AMP from IMP: step 1/2.</text>
</comment>
<comment type="subunit">
    <text evidence="1">Homodimer.</text>
</comment>
<comment type="subcellular location">
    <subcellularLocation>
        <location evidence="1">Cytoplasm</location>
    </subcellularLocation>
</comment>
<comment type="similarity">
    <text evidence="1">Belongs to the adenylosuccinate synthetase family.</text>
</comment>
<accession>Q5FFQ3</accession>
<feature type="chain" id="PRO_0000224278" description="Adenylosuccinate synthetase">
    <location>
        <begin position="1"/>
        <end position="430"/>
    </location>
</feature>
<feature type="active site" description="Proton acceptor" evidence="1">
    <location>
        <position position="13"/>
    </location>
</feature>
<feature type="active site" description="Proton donor" evidence="1">
    <location>
        <position position="41"/>
    </location>
</feature>
<feature type="binding site" evidence="1">
    <location>
        <begin position="12"/>
        <end position="18"/>
    </location>
    <ligand>
        <name>GTP</name>
        <dbReference type="ChEBI" id="CHEBI:37565"/>
    </ligand>
</feature>
<feature type="binding site" description="in other chain" evidence="1">
    <location>
        <begin position="13"/>
        <end position="16"/>
    </location>
    <ligand>
        <name>IMP</name>
        <dbReference type="ChEBI" id="CHEBI:58053"/>
        <note>ligand shared between dimeric partners</note>
    </ligand>
</feature>
<feature type="binding site" evidence="1">
    <location>
        <position position="13"/>
    </location>
    <ligand>
        <name>Mg(2+)</name>
        <dbReference type="ChEBI" id="CHEBI:18420"/>
    </ligand>
</feature>
<feature type="binding site" description="in other chain" evidence="1">
    <location>
        <begin position="38"/>
        <end position="41"/>
    </location>
    <ligand>
        <name>IMP</name>
        <dbReference type="ChEBI" id="CHEBI:58053"/>
        <note>ligand shared between dimeric partners</note>
    </ligand>
</feature>
<feature type="binding site" evidence="1">
    <location>
        <begin position="40"/>
        <end position="42"/>
    </location>
    <ligand>
        <name>GTP</name>
        <dbReference type="ChEBI" id="CHEBI:37565"/>
    </ligand>
</feature>
<feature type="binding site" evidence="1">
    <location>
        <position position="40"/>
    </location>
    <ligand>
        <name>Mg(2+)</name>
        <dbReference type="ChEBI" id="CHEBI:18420"/>
    </ligand>
</feature>
<feature type="binding site" description="in other chain" evidence="1">
    <location>
        <position position="129"/>
    </location>
    <ligand>
        <name>IMP</name>
        <dbReference type="ChEBI" id="CHEBI:58053"/>
        <note>ligand shared between dimeric partners</note>
    </ligand>
</feature>
<feature type="binding site" evidence="1">
    <location>
        <position position="143"/>
    </location>
    <ligand>
        <name>IMP</name>
        <dbReference type="ChEBI" id="CHEBI:58053"/>
        <note>ligand shared between dimeric partners</note>
    </ligand>
</feature>
<feature type="binding site" description="in other chain" evidence="1">
    <location>
        <position position="224"/>
    </location>
    <ligand>
        <name>IMP</name>
        <dbReference type="ChEBI" id="CHEBI:58053"/>
        <note>ligand shared between dimeric partners</note>
    </ligand>
</feature>
<feature type="binding site" description="in other chain" evidence="1">
    <location>
        <position position="239"/>
    </location>
    <ligand>
        <name>IMP</name>
        <dbReference type="ChEBI" id="CHEBI:58053"/>
        <note>ligand shared between dimeric partners</note>
    </ligand>
</feature>
<feature type="binding site" evidence="1">
    <location>
        <begin position="299"/>
        <end position="305"/>
    </location>
    <ligand>
        <name>substrate</name>
    </ligand>
</feature>
<feature type="binding site" description="in other chain" evidence="1">
    <location>
        <position position="303"/>
    </location>
    <ligand>
        <name>IMP</name>
        <dbReference type="ChEBI" id="CHEBI:58053"/>
        <note>ligand shared between dimeric partners</note>
    </ligand>
</feature>
<feature type="binding site" evidence="1">
    <location>
        <position position="305"/>
    </location>
    <ligand>
        <name>GTP</name>
        <dbReference type="ChEBI" id="CHEBI:37565"/>
    </ligand>
</feature>
<feature type="binding site" evidence="1">
    <location>
        <begin position="331"/>
        <end position="333"/>
    </location>
    <ligand>
        <name>GTP</name>
        <dbReference type="ChEBI" id="CHEBI:37565"/>
    </ligand>
</feature>
<feature type="binding site" evidence="1">
    <location>
        <begin position="413"/>
        <end position="415"/>
    </location>
    <ligand>
        <name>GTP</name>
        <dbReference type="ChEBI" id="CHEBI:37565"/>
    </ligand>
</feature>
<evidence type="ECO:0000255" key="1">
    <source>
        <dbReference type="HAMAP-Rule" id="MF_00011"/>
    </source>
</evidence>
<dbReference type="EC" id="6.3.4.4" evidence="1"/>
<dbReference type="EMBL" id="CR925677">
    <property type="protein sequence ID" value="CAI28033.1"/>
    <property type="molecule type" value="Genomic_DNA"/>
</dbReference>
<dbReference type="RefSeq" id="WP_011255693.1">
    <property type="nucleotide sequence ID" value="NC_006831.1"/>
</dbReference>
<dbReference type="SMR" id="Q5FFQ3"/>
<dbReference type="KEGG" id="erg:ERGA_CDS_05810"/>
<dbReference type="HOGENOM" id="CLU_029848_0_0_5"/>
<dbReference type="OrthoDB" id="9807553at2"/>
<dbReference type="UniPathway" id="UPA00075">
    <property type="reaction ID" value="UER00335"/>
</dbReference>
<dbReference type="Proteomes" id="UP000000533">
    <property type="component" value="Chromosome"/>
</dbReference>
<dbReference type="GO" id="GO:0005737">
    <property type="term" value="C:cytoplasm"/>
    <property type="evidence" value="ECO:0007669"/>
    <property type="project" value="UniProtKB-SubCell"/>
</dbReference>
<dbReference type="GO" id="GO:0004019">
    <property type="term" value="F:adenylosuccinate synthase activity"/>
    <property type="evidence" value="ECO:0007669"/>
    <property type="project" value="UniProtKB-UniRule"/>
</dbReference>
<dbReference type="GO" id="GO:0005525">
    <property type="term" value="F:GTP binding"/>
    <property type="evidence" value="ECO:0007669"/>
    <property type="project" value="UniProtKB-UniRule"/>
</dbReference>
<dbReference type="GO" id="GO:0000287">
    <property type="term" value="F:magnesium ion binding"/>
    <property type="evidence" value="ECO:0007669"/>
    <property type="project" value="UniProtKB-UniRule"/>
</dbReference>
<dbReference type="GO" id="GO:0044208">
    <property type="term" value="P:'de novo' AMP biosynthetic process"/>
    <property type="evidence" value="ECO:0007669"/>
    <property type="project" value="UniProtKB-UniRule"/>
</dbReference>
<dbReference type="GO" id="GO:0046040">
    <property type="term" value="P:IMP metabolic process"/>
    <property type="evidence" value="ECO:0007669"/>
    <property type="project" value="TreeGrafter"/>
</dbReference>
<dbReference type="CDD" id="cd03108">
    <property type="entry name" value="AdSS"/>
    <property type="match status" value="1"/>
</dbReference>
<dbReference type="FunFam" id="1.10.300.10:FF:000001">
    <property type="entry name" value="Adenylosuccinate synthetase"/>
    <property type="match status" value="1"/>
</dbReference>
<dbReference type="FunFam" id="3.90.170.10:FF:000001">
    <property type="entry name" value="Adenylosuccinate synthetase"/>
    <property type="match status" value="1"/>
</dbReference>
<dbReference type="Gene3D" id="3.40.440.10">
    <property type="entry name" value="Adenylosuccinate Synthetase, subunit A, domain 1"/>
    <property type="match status" value="1"/>
</dbReference>
<dbReference type="Gene3D" id="1.10.300.10">
    <property type="entry name" value="Adenylosuccinate Synthetase, subunit A, domain 2"/>
    <property type="match status" value="1"/>
</dbReference>
<dbReference type="Gene3D" id="3.90.170.10">
    <property type="entry name" value="Adenylosuccinate Synthetase, subunit A, domain 3"/>
    <property type="match status" value="1"/>
</dbReference>
<dbReference type="HAMAP" id="MF_00011">
    <property type="entry name" value="Adenylosucc_synth"/>
    <property type="match status" value="1"/>
</dbReference>
<dbReference type="InterPro" id="IPR018220">
    <property type="entry name" value="Adenylosuccin_syn_GTP-bd"/>
</dbReference>
<dbReference type="InterPro" id="IPR033128">
    <property type="entry name" value="Adenylosuccin_syn_Lys_AS"/>
</dbReference>
<dbReference type="InterPro" id="IPR042109">
    <property type="entry name" value="Adenylosuccinate_synth_dom1"/>
</dbReference>
<dbReference type="InterPro" id="IPR042110">
    <property type="entry name" value="Adenylosuccinate_synth_dom2"/>
</dbReference>
<dbReference type="InterPro" id="IPR042111">
    <property type="entry name" value="Adenylosuccinate_synth_dom3"/>
</dbReference>
<dbReference type="InterPro" id="IPR001114">
    <property type="entry name" value="Adenylosuccinate_synthetase"/>
</dbReference>
<dbReference type="InterPro" id="IPR027417">
    <property type="entry name" value="P-loop_NTPase"/>
</dbReference>
<dbReference type="NCBIfam" id="NF002223">
    <property type="entry name" value="PRK01117.1"/>
    <property type="match status" value="1"/>
</dbReference>
<dbReference type="NCBIfam" id="TIGR00184">
    <property type="entry name" value="purA"/>
    <property type="match status" value="1"/>
</dbReference>
<dbReference type="PANTHER" id="PTHR11846">
    <property type="entry name" value="ADENYLOSUCCINATE SYNTHETASE"/>
    <property type="match status" value="1"/>
</dbReference>
<dbReference type="PANTHER" id="PTHR11846:SF0">
    <property type="entry name" value="ADENYLOSUCCINATE SYNTHETASE"/>
    <property type="match status" value="1"/>
</dbReference>
<dbReference type="Pfam" id="PF00709">
    <property type="entry name" value="Adenylsucc_synt"/>
    <property type="match status" value="1"/>
</dbReference>
<dbReference type="SMART" id="SM00788">
    <property type="entry name" value="Adenylsucc_synt"/>
    <property type="match status" value="1"/>
</dbReference>
<dbReference type="SUPFAM" id="SSF52540">
    <property type="entry name" value="P-loop containing nucleoside triphosphate hydrolases"/>
    <property type="match status" value="1"/>
</dbReference>
<dbReference type="PROSITE" id="PS01266">
    <property type="entry name" value="ADENYLOSUCCIN_SYN_1"/>
    <property type="match status" value="1"/>
</dbReference>
<dbReference type="PROSITE" id="PS00513">
    <property type="entry name" value="ADENYLOSUCCIN_SYN_2"/>
    <property type="match status" value="1"/>
</dbReference>
<name>PURA_EHRRG</name>
<reference key="1">
    <citation type="journal article" date="2006" name="J. Bacteriol.">
        <title>Comparative genomic analysis of three strains of Ehrlichia ruminantium reveals an active process of genome size plasticity.</title>
        <authorList>
            <person name="Frutos R."/>
            <person name="Viari A."/>
            <person name="Ferraz C."/>
            <person name="Morgat A."/>
            <person name="Eychenie S."/>
            <person name="Kandassamy Y."/>
            <person name="Chantal I."/>
            <person name="Bensaid A."/>
            <person name="Coissac E."/>
            <person name="Vachiery N."/>
            <person name="Demaille J."/>
            <person name="Martinez D."/>
        </authorList>
    </citation>
    <scope>NUCLEOTIDE SEQUENCE [LARGE SCALE GENOMIC DNA]</scope>
    <source>
        <strain>Gardel</strain>
    </source>
</reference>
<sequence length="430" mass="47998">MTNIVVVGLQWGDEGKGKVVDWLSNNADAVVRFQGGNNAGHTIVIQEKTYKLNLLPSSILHNNKLSIIGNGVVLDPYALMSEIDNLRINGININTQNLVISESCPLVLNIHKEADTLFEQLRQNTIGTTNKGIGPCYADKISRRALRVCDLFDKKDILYNKVNNLLNYHNLLRQNFNILPIEASKLVDELLDIAPKILPFVKPVWKVIHDLTQQNKTIIFEGAQGTFLDIDHGTYPFVTSSNTIAPQAFVGGGINLSHSSCILGVIKAYTTRVGNGPFFTEQKNEIGKSMFERGNEIGTVSNRERRCGWFDAVLAKQAIILSGVSGLVLTKLDVLDQFSEIKICTQYKYDGVIYDYIPASSYVQNNLEPIYETVPGWKENTFGSVTYEDLPKNAISYIKKIEEILKVPVYLISTGPERNAMIIINDKFLK</sequence>
<protein>
    <recommendedName>
        <fullName evidence="1">Adenylosuccinate synthetase</fullName>
        <shortName evidence="1">AMPSase</shortName>
        <shortName evidence="1">AdSS</shortName>
        <ecNumber evidence="1">6.3.4.4</ecNumber>
    </recommendedName>
    <alternativeName>
        <fullName evidence="1">IMP--aspartate ligase</fullName>
    </alternativeName>
</protein>
<gene>
    <name evidence="1" type="primary">purA</name>
    <name type="ordered locus">ERGA_CDS_05810</name>
</gene>
<organism>
    <name type="scientific">Ehrlichia ruminantium (strain Gardel)</name>
    <dbReference type="NCBI Taxonomy" id="302409"/>
    <lineage>
        <taxon>Bacteria</taxon>
        <taxon>Pseudomonadati</taxon>
        <taxon>Pseudomonadota</taxon>
        <taxon>Alphaproteobacteria</taxon>
        <taxon>Rickettsiales</taxon>
        <taxon>Anaplasmataceae</taxon>
        <taxon>Ehrlichia</taxon>
    </lineage>
</organism>